<feature type="chain" id="PRO_0000389020" description="Splicing factor YJU2">
    <location>
        <begin position="1"/>
        <end position="324"/>
    </location>
</feature>
<feature type="region of interest" description="Disordered" evidence="3">
    <location>
        <begin position="294"/>
        <end position="324"/>
    </location>
</feature>
<feature type="compositionally biased region" description="Low complexity" evidence="3">
    <location>
        <begin position="302"/>
        <end position="316"/>
    </location>
</feature>
<feature type="binding site" evidence="2">
    <location>
        <position position="43"/>
    </location>
    <ligand>
        <name>Zn(2+)</name>
        <dbReference type="ChEBI" id="CHEBI:29105"/>
    </ligand>
</feature>
<feature type="binding site" evidence="2">
    <location>
        <position position="46"/>
    </location>
    <ligand>
        <name>Zn(2+)</name>
        <dbReference type="ChEBI" id="CHEBI:29105"/>
    </ligand>
</feature>
<feature type="binding site" evidence="2">
    <location>
        <position position="80"/>
    </location>
    <ligand>
        <name>Zn(2+)</name>
        <dbReference type="ChEBI" id="CHEBI:29105"/>
    </ligand>
</feature>
<feature type="binding site" evidence="2">
    <location>
        <position position="83"/>
    </location>
    <ligand>
        <name>Zn(2+)</name>
        <dbReference type="ChEBI" id="CHEBI:29105"/>
    </ligand>
</feature>
<organism>
    <name type="scientific">Dictyostelium discoideum</name>
    <name type="common">Social amoeba</name>
    <dbReference type="NCBI Taxonomy" id="44689"/>
    <lineage>
        <taxon>Eukaryota</taxon>
        <taxon>Amoebozoa</taxon>
        <taxon>Evosea</taxon>
        <taxon>Eumycetozoa</taxon>
        <taxon>Dictyostelia</taxon>
        <taxon>Dictyosteliales</taxon>
        <taxon>Dictyosteliaceae</taxon>
        <taxon>Dictyostelium</taxon>
    </lineage>
</organism>
<proteinExistence type="inferred from homology"/>
<name>YJU2_DICDI</name>
<comment type="function">
    <text evidence="2">Part of the spliceosome which catalyzes two sequential transesterification reactions, first the excision of the non-coding intron from pre-mRNA and then the ligation of the coding exons to form the mature mRNA. Plays a role in stabilizing the structure of the spliceosome catalytic core and docking of the branch helix into the active site, producing 5'-exon and lariat intron-3'-intermediates.</text>
</comment>
<comment type="subunit">
    <text evidence="2">Component of the spliceosome. Present in the activated B complex, the catalytically activated B* complex which catalyzes the branching, the catalytic step 1 C complex catalyzing the exon ligation, and the postcatalytic P complex containing the ligated exons (mRNA) and the excised lariat intron.</text>
</comment>
<comment type="subcellular location">
    <subcellularLocation>
        <location evidence="1 2">Nucleus</location>
    </subcellularLocation>
</comment>
<comment type="similarity">
    <text evidence="2">Belongs to the CWC16 family. YJU2 subfamily.</text>
</comment>
<reference key="1">
    <citation type="journal article" date="2005" name="Nature">
        <title>The genome of the social amoeba Dictyostelium discoideum.</title>
        <authorList>
            <person name="Eichinger L."/>
            <person name="Pachebat J.A."/>
            <person name="Gloeckner G."/>
            <person name="Rajandream M.A."/>
            <person name="Sucgang R."/>
            <person name="Berriman M."/>
            <person name="Song J."/>
            <person name="Olsen R."/>
            <person name="Szafranski K."/>
            <person name="Xu Q."/>
            <person name="Tunggal B."/>
            <person name="Kummerfeld S."/>
            <person name="Madera M."/>
            <person name="Konfortov B.A."/>
            <person name="Rivero F."/>
            <person name="Bankier A.T."/>
            <person name="Lehmann R."/>
            <person name="Hamlin N."/>
            <person name="Davies R."/>
            <person name="Gaudet P."/>
            <person name="Fey P."/>
            <person name="Pilcher K."/>
            <person name="Chen G."/>
            <person name="Saunders D."/>
            <person name="Sodergren E.J."/>
            <person name="Davis P."/>
            <person name="Kerhornou A."/>
            <person name="Nie X."/>
            <person name="Hall N."/>
            <person name="Anjard C."/>
            <person name="Hemphill L."/>
            <person name="Bason N."/>
            <person name="Farbrother P."/>
            <person name="Desany B."/>
            <person name="Just E."/>
            <person name="Morio T."/>
            <person name="Rost R."/>
            <person name="Churcher C.M."/>
            <person name="Cooper J."/>
            <person name="Haydock S."/>
            <person name="van Driessche N."/>
            <person name="Cronin A."/>
            <person name="Goodhead I."/>
            <person name="Muzny D.M."/>
            <person name="Mourier T."/>
            <person name="Pain A."/>
            <person name="Lu M."/>
            <person name="Harper D."/>
            <person name="Lindsay R."/>
            <person name="Hauser H."/>
            <person name="James K.D."/>
            <person name="Quiles M."/>
            <person name="Madan Babu M."/>
            <person name="Saito T."/>
            <person name="Buchrieser C."/>
            <person name="Wardroper A."/>
            <person name="Felder M."/>
            <person name="Thangavelu M."/>
            <person name="Johnson D."/>
            <person name="Knights A."/>
            <person name="Loulseged H."/>
            <person name="Mungall K.L."/>
            <person name="Oliver K."/>
            <person name="Price C."/>
            <person name="Quail M.A."/>
            <person name="Urushihara H."/>
            <person name="Hernandez J."/>
            <person name="Rabbinowitsch E."/>
            <person name="Steffen D."/>
            <person name="Sanders M."/>
            <person name="Ma J."/>
            <person name="Kohara Y."/>
            <person name="Sharp S."/>
            <person name="Simmonds M.N."/>
            <person name="Spiegler S."/>
            <person name="Tivey A."/>
            <person name="Sugano S."/>
            <person name="White B."/>
            <person name="Walker D."/>
            <person name="Woodward J.R."/>
            <person name="Winckler T."/>
            <person name="Tanaka Y."/>
            <person name="Shaulsky G."/>
            <person name="Schleicher M."/>
            <person name="Weinstock G.M."/>
            <person name="Rosenthal A."/>
            <person name="Cox E.C."/>
            <person name="Chisholm R.L."/>
            <person name="Gibbs R.A."/>
            <person name="Loomis W.F."/>
            <person name="Platzer M."/>
            <person name="Kay R.R."/>
            <person name="Williams J.G."/>
            <person name="Dear P.H."/>
            <person name="Noegel A.A."/>
            <person name="Barrell B.G."/>
            <person name="Kuspa A."/>
        </authorList>
    </citation>
    <scope>NUCLEOTIDE SEQUENCE [LARGE SCALE GENOMIC DNA]</scope>
    <source>
        <strain>AX4</strain>
    </source>
</reference>
<protein>
    <recommendedName>
        <fullName evidence="2">Splicing factor YJU2</fullName>
    </recommendedName>
    <alternativeName>
        <fullName evidence="4">Coiled-coil domain-containing protein 94 homolog</fullName>
    </alternativeName>
</protein>
<dbReference type="EMBL" id="AAFI02000031">
    <property type="protein sequence ID" value="EAL67679.1"/>
    <property type="molecule type" value="Genomic_DNA"/>
</dbReference>
<dbReference type="RefSeq" id="XP_641652.1">
    <property type="nucleotide sequence ID" value="XM_636560.1"/>
</dbReference>
<dbReference type="SMR" id="Q54WR5"/>
<dbReference type="FunCoup" id="Q54WR5">
    <property type="interactions" value="250"/>
</dbReference>
<dbReference type="STRING" id="44689.Q54WR5"/>
<dbReference type="PaxDb" id="44689-DDB0233745"/>
<dbReference type="EnsemblProtists" id="EAL67679">
    <property type="protein sequence ID" value="EAL67679"/>
    <property type="gene ID" value="DDB_G0279481"/>
</dbReference>
<dbReference type="GeneID" id="8622059"/>
<dbReference type="KEGG" id="ddi:DDB_G0279481"/>
<dbReference type="dictyBase" id="DDB_G0279481">
    <property type="gene designation" value="ccdc94"/>
</dbReference>
<dbReference type="VEuPathDB" id="AmoebaDB:DDB_G0279481"/>
<dbReference type="eggNOG" id="KOG2989">
    <property type="taxonomic scope" value="Eukaryota"/>
</dbReference>
<dbReference type="HOGENOM" id="CLU_053603_0_0_1"/>
<dbReference type="InParanoid" id="Q54WR5"/>
<dbReference type="OMA" id="MNKRHID"/>
<dbReference type="PhylomeDB" id="Q54WR5"/>
<dbReference type="Reactome" id="R-DDI-72163">
    <property type="pathway name" value="mRNA Splicing - Major Pathway"/>
</dbReference>
<dbReference type="PRO" id="PR:Q54WR5"/>
<dbReference type="Proteomes" id="UP000002195">
    <property type="component" value="Chromosome 3"/>
</dbReference>
<dbReference type="GO" id="GO:0071006">
    <property type="term" value="C:U2-type catalytic step 1 spliceosome"/>
    <property type="evidence" value="ECO:0000318"/>
    <property type="project" value="GO_Central"/>
</dbReference>
<dbReference type="GO" id="GO:0046872">
    <property type="term" value="F:metal ion binding"/>
    <property type="evidence" value="ECO:0007669"/>
    <property type="project" value="UniProtKB-KW"/>
</dbReference>
<dbReference type="GO" id="GO:0000349">
    <property type="term" value="P:generation of catalytic spliceosome for first transesterification step"/>
    <property type="evidence" value="ECO:0007669"/>
    <property type="project" value="UniProtKB-UniRule"/>
</dbReference>
<dbReference type="GO" id="GO:0043518">
    <property type="term" value="P:negative regulation of DNA damage response, signal transduction by p53 class mediator"/>
    <property type="evidence" value="ECO:0000250"/>
    <property type="project" value="UniProtKB"/>
</dbReference>
<dbReference type="GO" id="GO:0008380">
    <property type="term" value="P:RNA splicing"/>
    <property type="evidence" value="ECO:0000318"/>
    <property type="project" value="GO_Central"/>
</dbReference>
<dbReference type="HAMAP" id="MF_03226">
    <property type="entry name" value="YJU2"/>
    <property type="match status" value="1"/>
</dbReference>
<dbReference type="InterPro" id="IPR007590">
    <property type="entry name" value="Saf4/Yju2"/>
</dbReference>
<dbReference type="InterPro" id="IPR043701">
    <property type="entry name" value="Yju2"/>
</dbReference>
<dbReference type="PANTHER" id="PTHR12111">
    <property type="entry name" value="SPLICING FACTOR YJU2"/>
    <property type="match status" value="1"/>
</dbReference>
<dbReference type="PANTHER" id="PTHR12111:SF1">
    <property type="entry name" value="SPLICING FACTOR YJU2"/>
    <property type="match status" value="1"/>
</dbReference>
<dbReference type="Pfam" id="PF04502">
    <property type="entry name" value="Saf4_Yju2"/>
    <property type="match status" value="1"/>
</dbReference>
<evidence type="ECO:0000250" key="1">
    <source>
        <dbReference type="UniProtKB" id="Q9BW85"/>
    </source>
</evidence>
<evidence type="ECO:0000255" key="2">
    <source>
        <dbReference type="HAMAP-Rule" id="MF_03226"/>
    </source>
</evidence>
<evidence type="ECO:0000256" key="3">
    <source>
        <dbReference type="SAM" id="MobiDB-lite"/>
    </source>
</evidence>
<evidence type="ECO:0000305" key="4"/>
<sequence>MGERKVISKYYPPDFDPSKVAKIKVKRPTFTKVTTMLPMSIRCNTCGEYIGRGTKFNAKKETVQNEDYLGIKIYRFFLRCKKCAAELTIKTDPKNSEYVCESGATRNYEPWKETDEEKSNRMTKEQEEEQDAMIALENRTLESKREMEMLDALEEIKSLNSRNSEIDTEQLLEYNLQKQELEEKLQDEEDDLLVKSIFNNKNKLELNQINDNNSINNNIDSNKIKRIENDDDDGDKFNSLFSNNNKNNKNIINNNNNNNNNINTTSISNTIETTPTTNQKTSILGNKVKVVINKQEEPIPKNNNNSEPNSFSSFMSAYSDDEED</sequence>
<gene>
    <name type="primary">yju2</name>
    <name type="synonym">ccdc94</name>
    <name type="ORF">DDB_G0279481</name>
</gene>
<accession>Q54WR5</accession>
<keyword id="KW-0479">Metal-binding</keyword>
<keyword id="KW-0507">mRNA processing</keyword>
<keyword id="KW-0508">mRNA splicing</keyword>
<keyword id="KW-0539">Nucleus</keyword>
<keyword id="KW-1185">Reference proteome</keyword>
<keyword id="KW-0747">Spliceosome</keyword>
<keyword id="KW-0862">Zinc</keyword>